<dbReference type="EMBL" id="BA000001">
    <property type="protein sequence ID" value="BAA29432.1"/>
    <property type="molecule type" value="Genomic_DNA"/>
</dbReference>
<dbReference type="PIR" id="C71143">
    <property type="entry name" value="C71143"/>
</dbReference>
<dbReference type="RefSeq" id="WP_010884446.1">
    <property type="nucleotide sequence ID" value="NC_000961.1"/>
</dbReference>
<dbReference type="SMR" id="O58096"/>
<dbReference type="STRING" id="70601.gene:9377277"/>
<dbReference type="EnsemblBacteria" id="BAA29432">
    <property type="protein sequence ID" value="BAA29432"/>
    <property type="gene ID" value="BAA29432"/>
</dbReference>
<dbReference type="GeneID" id="1444233"/>
<dbReference type="KEGG" id="pho:PH0358"/>
<dbReference type="eggNOG" id="arCOG01921">
    <property type="taxonomic scope" value="Archaea"/>
</dbReference>
<dbReference type="OrthoDB" id="18795at2157"/>
<dbReference type="Proteomes" id="UP000000752">
    <property type="component" value="Chromosome"/>
</dbReference>
<dbReference type="HAMAP" id="MF_00585">
    <property type="entry name" value="UPF0216"/>
    <property type="match status" value="1"/>
</dbReference>
<dbReference type="InterPro" id="IPR002746">
    <property type="entry name" value="UPF0216"/>
</dbReference>
<dbReference type="NCBIfam" id="NF003153">
    <property type="entry name" value="PRK04115.1"/>
    <property type="match status" value="1"/>
</dbReference>
<dbReference type="Pfam" id="PF01886">
    <property type="entry name" value="DUF61"/>
    <property type="match status" value="1"/>
</dbReference>
<dbReference type="PIRSF" id="PIRSF005264">
    <property type="entry name" value="UCP005264"/>
    <property type="match status" value="1"/>
</dbReference>
<proteinExistence type="inferred from homology"/>
<comment type="similarity">
    <text evidence="1">Belongs to the UPF0216 family.</text>
</comment>
<gene>
    <name type="ordered locus">PH0358</name>
</gene>
<organism>
    <name type="scientific">Pyrococcus horikoshii (strain ATCC 700860 / DSM 12428 / JCM 9974 / NBRC 100139 / OT-3)</name>
    <dbReference type="NCBI Taxonomy" id="70601"/>
    <lineage>
        <taxon>Archaea</taxon>
        <taxon>Methanobacteriati</taxon>
        <taxon>Methanobacteriota</taxon>
        <taxon>Thermococci</taxon>
        <taxon>Thermococcales</taxon>
        <taxon>Thermococcaceae</taxon>
        <taxon>Pyrococcus</taxon>
    </lineage>
</organism>
<name>Y358_PYRHO</name>
<reference key="1">
    <citation type="journal article" date="1998" name="DNA Res.">
        <title>Complete sequence and gene organization of the genome of a hyper-thermophilic archaebacterium, Pyrococcus horikoshii OT3.</title>
        <authorList>
            <person name="Kawarabayasi Y."/>
            <person name="Sawada M."/>
            <person name="Horikawa H."/>
            <person name="Haikawa Y."/>
            <person name="Hino Y."/>
            <person name="Yamamoto S."/>
            <person name="Sekine M."/>
            <person name="Baba S."/>
            <person name="Kosugi H."/>
            <person name="Hosoyama A."/>
            <person name="Nagai Y."/>
            <person name="Sakai M."/>
            <person name="Ogura K."/>
            <person name="Otsuka R."/>
            <person name="Nakazawa H."/>
            <person name="Takamiya M."/>
            <person name="Ohfuku Y."/>
            <person name="Funahashi T."/>
            <person name="Tanaka T."/>
            <person name="Kudoh Y."/>
            <person name="Yamazaki J."/>
            <person name="Kushida N."/>
            <person name="Oguchi A."/>
            <person name="Aoki K."/>
            <person name="Yoshizawa T."/>
            <person name="Nakamura Y."/>
            <person name="Robb F.T."/>
            <person name="Horikoshi K."/>
            <person name="Masuchi Y."/>
            <person name="Shizuya H."/>
            <person name="Kikuchi H."/>
        </authorList>
    </citation>
    <scope>NUCLEOTIDE SEQUENCE [LARGE SCALE GENOMIC DNA]</scope>
    <source>
        <strain>ATCC 700860 / DSM 12428 / JCM 9974 / NBRC 100139 / OT-3</strain>
    </source>
</reference>
<evidence type="ECO:0000255" key="1">
    <source>
        <dbReference type="HAMAP-Rule" id="MF_00585"/>
    </source>
</evidence>
<sequence>MEKIEKIIEFEIARINSHLPRARRSLKELLEMKEAKVTLRDGSEHYFKREELKLLANLLDEDEISKLKLPIVIEISTLERDKIMIRGRVEVKVIKKVLGLEEGYLEENVLKLPRYYLAEIRRKLPTTTVHAFIVEW</sequence>
<feature type="chain" id="PRO_0000144229" description="UPF0216 protein PH0358">
    <location>
        <begin position="1"/>
        <end position="136"/>
    </location>
</feature>
<protein>
    <recommendedName>
        <fullName evidence="1">UPF0216 protein PH0358</fullName>
    </recommendedName>
</protein>
<accession>O58096</accession>